<gene>
    <name evidence="1" type="primary">nifW</name>
    <name type="ordered locus">AFE_1504</name>
</gene>
<protein>
    <recommendedName>
        <fullName evidence="1">Nitrogenase-stabilizing/protective protein NifW</fullName>
    </recommendedName>
</protein>
<accession>B7JA81</accession>
<feature type="chain" id="PRO_1000127805" description="Nitrogenase-stabilizing/protective protein NifW">
    <location>
        <begin position="1"/>
        <end position="110"/>
    </location>
</feature>
<name>NIFW_ACIF2</name>
<sequence>MSDLRKTLASLSSAEDFLKFLNIEYDETVVHINRLHILKRFHDYLKREGNTDALDDRALQALYVKLLSQSYQDFVVSDAVSEKVFKVFHQAMGVSHVSLEKVAVSARKGR</sequence>
<reference key="1">
    <citation type="journal article" date="2008" name="BMC Genomics">
        <title>Acidithiobacillus ferrooxidans metabolism: from genome sequence to industrial applications.</title>
        <authorList>
            <person name="Valdes J."/>
            <person name="Pedroso I."/>
            <person name="Quatrini R."/>
            <person name="Dodson R.J."/>
            <person name="Tettelin H."/>
            <person name="Blake R. II"/>
            <person name="Eisen J.A."/>
            <person name="Holmes D.S."/>
        </authorList>
    </citation>
    <scope>NUCLEOTIDE SEQUENCE [LARGE SCALE GENOMIC DNA]</scope>
    <source>
        <strain>ATCC 23270 / DSM 14882 / CIP 104768 / NCIMB 8455</strain>
    </source>
</reference>
<dbReference type="EMBL" id="CP001219">
    <property type="protein sequence ID" value="ACK78100.1"/>
    <property type="molecule type" value="Genomic_DNA"/>
</dbReference>
<dbReference type="RefSeq" id="WP_009564607.1">
    <property type="nucleotide sequence ID" value="NC_011761.1"/>
</dbReference>
<dbReference type="SMR" id="B7JA81"/>
<dbReference type="STRING" id="243159.AFE_1504"/>
<dbReference type="PaxDb" id="243159-AFE_1504"/>
<dbReference type="GeneID" id="65280723"/>
<dbReference type="KEGG" id="afr:AFE_1504"/>
<dbReference type="eggNOG" id="ENOG50330W8">
    <property type="taxonomic scope" value="Bacteria"/>
</dbReference>
<dbReference type="HOGENOM" id="CLU_145318_1_0_6"/>
<dbReference type="Proteomes" id="UP000001362">
    <property type="component" value="Chromosome"/>
</dbReference>
<dbReference type="GO" id="GO:0009399">
    <property type="term" value="P:nitrogen fixation"/>
    <property type="evidence" value="ECO:0007669"/>
    <property type="project" value="UniProtKB-UniRule"/>
</dbReference>
<dbReference type="HAMAP" id="MF_00529">
    <property type="entry name" value="NifW"/>
    <property type="match status" value="1"/>
</dbReference>
<dbReference type="InterPro" id="IPR004893">
    <property type="entry name" value="NifW"/>
</dbReference>
<dbReference type="Pfam" id="PF03206">
    <property type="entry name" value="NifW"/>
    <property type="match status" value="1"/>
</dbReference>
<dbReference type="PIRSF" id="PIRSF005790">
    <property type="entry name" value="NifW"/>
    <property type="match status" value="1"/>
</dbReference>
<comment type="function">
    <text evidence="1">May protect the nitrogenase Fe-Mo protein from oxidative damage.</text>
</comment>
<comment type="subunit">
    <text evidence="1">Homotrimer; associates with NifD.</text>
</comment>
<comment type="similarity">
    <text evidence="1">Belongs to the NifW family.</text>
</comment>
<keyword id="KW-0535">Nitrogen fixation</keyword>
<keyword id="KW-1185">Reference proteome</keyword>
<proteinExistence type="inferred from homology"/>
<evidence type="ECO:0000255" key="1">
    <source>
        <dbReference type="HAMAP-Rule" id="MF_00529"/>
    </source>
</evidence>
<organism>
    <name type="scientific">Acidithiobacillus ferrooxidans (strain ATCC 23270 / DSM 14882 / CIP 104768 / NCIMB 8455)</name>
    <name type="common">Ferrobacillus ferrooxidans (strain ATCC 23270)</name>
    <dbReference type="NCBI Taxonomy" id="243159"/>
    <lineage>
        <taxon>Bacteria</taxon>
        <taxon>Pseudomonadati</taxon>
        <taxon>Pseudomonadota</taxon>
        <taxon>Acidithiobacillia</taxon>
        <taxon>Acidithiobacillales</taxon>
        <taxon>Acidithiobacillaceae</taxon>
        <taxon>Acidithiobacillus</taxon>
    </lineage>
</organism>